<sequence length="89" mass="10631">MALTQERKNEIIAEYRVHDTDTGSPEVQIAVLTAEINSLNEHVRVHKKDHHSYRGLMKMVGHRRNLLTYLRKKDVQRYRELIKRLGLRR</sequence>
<protein>
    <recommendedName>
        <fullName evidence="1">Small ribosomal subunit protein uS15</fullName>
    </recommendedName>
    <alternativeName>
        <fullName evidence="2">30S ribosomal protein S15</fullName>
    </alternativeName>
</protein>
<keyword id="KW-0687">Ribonucleoprotein</keyword>
<keyword id="KW-0689">Ribosomal protein</keyword>
<keyword id="KW-0694">RNA-binding</keyword>
<keyword id="KW-0699">rRNA-binding</keyword>
<accession>Q7ANZ1</accession>
<evidence type="ECO:0000255" key="1">
    <source>
        <dbReference type="HAMAP-Rule" id="MF_01343"/>
    </source>
</evidence>
<evidence type="ECO:0000305" key="2"/>
<dbReference type="EMBL" id="AL596168">
    <property type="protein sequence ID" value="CAC96598.1"/>
    <property type="molecule type" value="Genomic_DNA"/>
</dbReference>
<dbReference type="RefSeq" id="WP_003719603.1">
    <property type="nucleotide sequence ID" value="NC_003212.1"/>
</dbReference>
<dbReference type="SMR" id="Q7ANZ1"/>
<dbReference type="STRING" id="272626.gene:17565698"/>
<dbReference type="GeneID" id="93239206"/>
<dbReference type="KEGG" id="lin:rpsO"/>
<dbReference type="eggNOG" id="COG0184">
    <property type="taxonomic scope" value="Bacteria"/>
</dbReference>
<dbReference type="HOGENOM" id="CLU_148518_0_0_9"/>
<dbReference type="OrthoDB" id="9799262at2"/>
<dbReference type="Proteomes" id="UP000002513">
    <property type="component" value="Chromosome"/>
</dbReference>
<dbReference type="GO" id="GO:0022627">
    <property type="term" value="C:cytosolic small ribosomal subunit"/>
    <property type="evidence" value="ECO:0007669"/>
    <property type="project" value="TreeGrafter"/>
</dbReference>
<dbReference type="GO" id="GO:0019843">
    <property type="term" value="F:rRNA binding"/>
    <property type="evidence" value="ECO:0007669"/>
    <property type="project" value="UniProtKB-UniRule"/>
</dbReference>
<dbReference type="GO" id="GO:0003735">
    <property type="term" value="F:structural constituent of ribosome"/>
    <property type="evidence" value="ECO:0007669"/>
    <property type="project" value="InterPro"/>
</dbReference>
<dbReference type="GO" id="GO:0006412">
    <property type="term" value="P:translation"/>
    <property type="evidence" value="ECO:0007669"/>
    <property type="project" value="UniProtKB-UniRule"/>
</dbReference>
<dbReference type="CDD" id="cd00353">
    <property type="entry name" value="Ribosomal_S15p_S13e"/>
    <property type="match status" value="1"/>
</dbReference>
<dbReference type="FunFam" id="1.10.287.10:FF:000002">
    <property type="entry name" value="30S ribosomal protein S15"/>
    <property type="match status" value="1"/>
</dbReference>
<dbReference type="Gene3D" id="6.10.250.3130">
    <property type="match status" value="1"/>
</dbReference>
<dbReference type="Gene3D" id="1.10.287.10">
    <property type="entry name" value="S15/NS1, RNA-binding"/>
    <property type="match status" value="1"/>
</dbReference>
<dbReference type="HAMAP" id="MF_01343_B">
    <property type="entry name" value="Ribosomal_uS15_B"/>
    <property type="match status" value="1"/>
</dbReference>
<dbReference type="InterPro" id="IPR000589">
    <property type="entry name" value="Ribosomal_uS15"/>
</dbReference>
<dbReference type="InterPro" id="IPR005290">
    <property type="entry name" value="Ribosomal_uS15_bac-type"/>
</dbReference>
<dbReference type="InterPro" id="IPR009068">
    <property type="entry name" value="uS15_NS1_RNA-bd_sf"/>
</dbReference>
<dbReference type="NCBIfam" id="TIGR00952">
    <property type="entry name" value="S15_bact"/>
    <property type="match status" value="1"/>
</dbReference>
<dbReference type="PANTHER" id="PTHR23321">
    <property type="entry name" value="RIBOSOMAL PROTEIN S15, BACTERIAL AND ORGANELLAR"/>
    <property type="match status" value="1"/>
</dbReference>
<dbReference type="PANTHER" id="PTHR23321:SF26">
    <property type="entry name" value="SMALL RIBOSOMAL SUBUNIT PROTEIN US15M"/>
    <property type="match status" value="1"/>
</dbReference>
<dbReference type="Pfam" id="PF00312">
    <property type="entry name" value="Ribosomal_S15"/>
    <property type="match status" value="1"/>
</dbReference>
<dbReference type="SMART" id="SM01387">
    <property type="entry name" value="Ribosomal_S15"/>
    <property type="match status" value="1"/>
</dbReference>
<dbReference type="SUPFAM" id="SSF47060">
    <property type="entry name" value="S15/NS1 RNA-binding domain"/>
    <property type="match status" value="1"/>
</dbReference>
<dbReference type="PROSITE" id="PS00362">
    <property type="entry name" value="RIBOSOMAL_S15"/>
    <property type="match status" value="1"/>
</dbReference>
<proteinExistence type="inferred from homology"/>
<name>RS15_LISIN</name>
<gene>
    <name evidence="1" type="primary">rpsO</name>
    <name type="ordered locus">lin1367</name>
</gene>
<feature type="chain" id="PRO_0000115464" description="Small ribosomal subunit protein uS15">
    <location>
        <begin position="1"/>
        <end position="89"/>
    </location>
</feature>
<reference key="1">
    <citation type="journal article" date="2001" name="Science">
        <title>Comparative genomics of Listeria species.</title>
        <authorList>
            <person name="Glaser P."/>
            <person name="Frangeul L."/>
            <person name="Buchrieser C."/>
            <person name="Rusniok C."/>
            <person name="Amend A."/>
            <person name="Baquero F."/>
            <person name="Berche P."/>
            <person name="Bloecker H."/>
            <person name="Brandt P."/>
            <person name="Chakraborty T."/>
            <person name="Charbit A."/>
            <person name="Chetouani F."/>
            <person name="Couve E."/>
            <person name="de Daruvar A."/>
            <person name="Dehoux P."/>
            <person name="Domann E."/>
            <person name="Dominguez-Bernal G."/>
            <person name="Duchaud E."/>
            <person name="Durant L."/>
            <person name="Dussurget O."/>
            <person name="Entian K.-D."/>
            <person name="Fsihi H."/>
            <person name="Garcia-del Portillo F."/>
            <person name="Garrido P."/>
            <person name="Gautier L."/>
            <person name="Goebel W."/>
            <person name="Gomez-Lopez N."/>
            <person name="Hain T."/>
            <person name="Hauf J."/>
            <person name="Jackson D."/>
            <person name="Jones L.-M."/>
            <person name="Kaerst U."/>
            <person name="Kreft J."/>
            <person name="Kuhn M."/>
            <person name="Kunst F."/>
            <person name="Kurapkat G."/>
            <person name="Madueno E."/>
            <person name="Maitournam A."/>
            <person name="Mata Vicente J."/>
            <person name="Ng E."/>
            <person name="Nedjari H."/>
            <person name="Nordsiek G."/>
            <person name="Novella S."/>
            <person name="de Pablos B."/>
            <person name="Perez-Diaz J.-C."/>
            <person name="Purcell R."/>
            <person name="Remmel B."/>
            <person name="Rose M."/>
            <person name="Schlueter T."/>
            <person name="Simoes N."/>
            <person name="Tierrez A."/>
            <person name="Vazquez-Boland J.-A."/>
            <person name="Voss H."/>
            <person name="Wehland J."/>
            <person name="Cossart P."/>
        </authorList>
    </citation>
    <scope>NUCLEOTIDE SEQUENCE [LARGE SCALE GENOMIC DNA]</scope>
    <source>
        <strain>ATCC BAA-680 / CLIP 11262</strain>
    </source>
</reference>
<organism>
    <name type="scientific">Listeria innocua serovar 6a (strain ATCC BAA-680 / CLIP 11262)</name>
    <dbReference type="NCBI Taxonomy" id="272626"/>
    <lineage>
        <taxon>Bacteria</taxon>
        <taxon>Bacillati</taxon>
        <taxon>Bacillota</taxon>
        <taxon>Bacilli</taxon>
        <taxon>Bacillales</taxon>
        <taxon>Listeriaceae</taxon>
        <taxon>Listeria</taxon>
    </lineage>
</organism>
<comment type="function">
    <text evidence="1">One of the primary rRNA binding proteins, it binds directly to 16S rRNA where it helps nucleate assembly of the platform of the 30S subunit by binding and bridging several RNA helices of the 16S rRNA.</text>
</comment>
<comment type="function">
    <text evidence="1">Forms an intersubunit bridge (bridge B4) with the 23S rRNA of the 50S subunit in the ribosome.</text>
</comment>
<comment type="subunit">
    <text evidence="1">Part of the 30S ribosomal subunit. Forms a bridge to the 50S subunit in the 70S ribosome, contacting the 23S rRNA.</text>
</comment>
<comment type="similarity">
    <text evidence="1">Belongs to the universal ribosomal protein uS15 family.</text>
</comment>